<evidence type="ECO:0000255" key="1">
    <source>
        <dbReference type="HAMAP-Rule" id="MF_01865"/>
    </source>
</evidence>
<evidence type="ECO:0000255" key="2">
    <source>
        <dbReference type="PROSITE-ProRule" id="PRU01266"/>
    </source>
</evidence>
<protein>
    <recommendedName>
        <fullName evidence="1">Ribosomal protein uS12 methylthiotransferase RimO</fullName>
        <shortName evidence="1">uS12 MTTase</shortName>
        <shortName evidence="1">uS12 methylthiotransferase</shortName>
        <ecNumber evidence="1">2.8.4.4</ecNumber>
    </recommendedName>
    <alternativeName>
        <fullName evidence="1">Ribosomal protein uS12 (aspartate-C(3))-methylthiotransferase</fullName>
    </alternativeName>
    <alternativeName>
        <fullName evidence="1">Ribosome maturation factor RimO</fullName>
    </alternativeName>
</protein>
<sequence length="441" mass="48306">MNKDLQKVGIVSLGCPKALVDSERILTRLRAEGYEVSPTYDDANVVIVNTCGFLDSAKAESLEAIGEAMAQNGRVIVTGCMGGDEAAIRSAHPGVLAVTGPQQYERVVAAVHEAAPPAHDPYLDLVPAEGIRLTPRHYAYLKISEGCNHGCTFCIIPDLRGKLVSRPASKVLMEAEKLAEAGVRELLVISQDTSAYGVDLRHGESPWHGAPVKARMTELCSALGELGIWVRLHYVYPYPFVDEIIPLMAEGKILPYLDIPFQHASPKILEAMKRPAAQDRTLERIRRWRTICPDIALRSTFIVGFPGETEDDFQQLLDWMGEAELDRVGCFKYEAVAGAKANALADAVPEEVKEERWHRFMAAQQEISERRLAQKVGTVIEAIIDEVDEEGAIGRTKGDAPEIDGSLFLNGETSLAPGDIVPVLIEHADEYDLWGSLAGKD</sequence>
<comment type="function">
    <text evidence="1">Catalyzes the methylthiolation of an aspartic acid residue of ribosomal protein uS12.</text>
</comment>
<comment type="catalytic activity">
    <reaction evidence="1">
        <text>L-aspartate(89)-[ribosomal protein uS12]-hydrogen + (sulfur carrier)-SH + AH2 + 2 S-adenosyl-L-methionine = 3-methylsulfanyl-L-aspartate(89)-[ribosomal protein uS12]-hydrogen + (sulfur carrier)-H + 5'-deoxyadenosine + L-methionine + A + S-adenosyl-L-homocysteine + 2 H(+)</text>
        <dbReference type="Rhea" id="RHEA:37087"/>
        <dbReference type="Rhea" id="RHEA-COMP:10460"/>
        <dbReference type="Rhea" id="RHEA-COMP:10461"/>
        <dbReference type="Rhea" id="RHEA-COMP:14737"/>
        <dbReference type="Rhea" id="RHEA-COMP:14739"/>
        <dbReference type="ChEBI" id="CHEBI:13193"/>
        <dbReference type="ChEBI" id="CHEBI:15378"/>
        <dbReference type="ChEBI" id="CHEBI:17319"/>
        <dbReference type="ChEBI" id="CHEBI:17499"/>
        <dbReference type="ChEBI" id="CHEBI:29917"/>
        <dbReference type="ChEBI" id="CHEBI:29961"/>
        <dbReference type="ChEBI" id="CHEBI:57844"/>
        <dbReference type="ChEBI" id="CHEBI:57856"/>
        <dbReference type="ChEBI" id="CHEBI:59789"/>
        <dbReference type="ChEBI" id="CHEBI:64428"/>
        <dbReference type="ChEBI" id="CHEBI:73599"/>
        <dbReference type="EC" id="2.8.4.4"/>
    </reaction>
</comment>
<comment type="cofactor">
    <cofactor evidence="1">
        <name>[4Fe-4S] cluster</name>
        <dbReference type="ChEBI" id="CHEBI:49883"/>
    </cofactor>
    <text evidence="1">Binds 2 [4Fe-4S] clusters. One cluster is coordinated with 3 cysteines and an exchangeable S-adenosyl-L-methionine.</text>
</comment>
<comment type="subcellular location">
    <subcellularLocation>
        <location evidence="1">Cytoplasm</location>
    </subcellularLocation>
</comment>
<comment type="similarity">
    <text evidence="1">Belongs to the methylthiotransferase family. RimO subfamily.</text>
</comment>
<organism>
    <name type="scientific">Rhodospirillum rubrum (strain ATCC 11170 / ATH 1.1.1 / DSM 467 / LMG 4362 / NCIMB 8255 / S1)</name>
    <dbReference type="NCBI Taxonomy" id="269796"/>
    <lineage>
        <taxon>Bacteria</taxon>
        <taxon>Pseudomonadati</taxon>
        <taxon>Pseudomonadota</taxon>
        <taxon>Alphaproteobacteria</taxon>
        <taxon>Rhodospirillales</taxon>
        <taxon>Rhodospirillaceae</taxon>
        <taxon>Rhodospirillum</taxon>
    </lineage>
</organism>
<feature type="chain" id="PRO_0000374977" description="Ribosomal protein uS12 methylthiotransferase RimO">
    <location>
        <begin position="1"/>
        <end position="441"/>
    </location>
</feature>
<feature type="domain" description="MTTase N-terminal" evidence="1">
    <location>
        <begin position="6"/>
        <end position="116"/>
    </location>
</feature>
<feature type="domain" description="Radical SAM core" evidence="2">
    <location>
        <begin position="133"/>
        <end position="370"/>
    </location>
</feature>
<feature type="domain" description="TRAM" evidence="1">
    <location>
        <begin position="373"/>
        <end position="439"/>
    </location>
</feature>
<feature type="binding site" evidence="1">
    <location>
        <position position="15"/>
    </location>
    <ligand>
        <name>[4Fe-4S] cluster</name>
        <dbReference type="ChEBI" id="CHEBI:49883"/>
        <label>1</label>
    </ligand>
</feature>
<feature type="binding site" evidence="1">
    <location>
        <position position="51"/>
    </location>
    <ligand>
        <name>[4Fe-4S] cluster</name>
        <dbReference type="ChEBI" id="CHEBI:49883"/>
        <label>1</label>
    </ligand>
</feature>
<feature type="binding site" evidence="1">
    <location>
        <position position="80"/>
    </location>
    <ligand>
        <name>[4Fe-4S] cluster</name>
        <dbReference type="ChEBI" id="CHEBI:49883"/>
        <label>1</label>
    </ligand>
</feature>
<feature type="binding site" evidence="1">
    <location>
        <position position="147"/>
    </location>
    <ligand>
        <name>[4Fe-4S] cluster</name>
        <dbReference type="ChEBI" id="CHEBI:49883"/>
        <label>2</label>
        <note>4Fe-4S-S-AdoMet</note>
    </ligand>
</feature>
<feature type="binding site" evidence="1">
    <location>
        <position position="151"/>
    </location>
    <ligand>
        <name>[4Fe-4S] cluster</name>
        <dbReference type="ChEBI" id="CHEBI:49883"/>
        <label>2</label>
        <note>4Fe-4S-S-AdoMet</note>
    </ligand>
</feature>
<feature type="binding site" evidence="1">
    <location>
        <position position="154"/>
    </location>
    <ligand>
        <name>[4Fe-4S] cluster</name>
        <dbReference type="ChEBI" id="CHEBI:49883"/>
        <label>2</label>
        <note>4Fe-4S-S-AdoMet</note>
    </ligand>
</feature>
<reference key="1">
    <citation type="journal article" date="2011" name="Stand. Genomic Sci.">
        <title>Complete genome sequence of Rhodospirillum rubrum type strain (S1).</title>
        <authorList>
            <person name="Munk A.C."/>
            <person name="Copeland A."/>
            <person name="Lucas S."/>
            <person name="Lapidus A."/>
            <person name="Del Rio T.G."/>
            <person name="Barry K."/>
            <person name="Detter J.C."/>
            <person name="Hammon N."/>
            <person name="Israni S."/>
            <person name="Pitluck S."/>
            <person name="Brettin T."/>
            <person name="Bruce D."/>
            <person name="Han C."/>
            <person name="Tapia R."/>
            <person name="Gilna P."/>
            <person name="Schmutz J."/>
            <person name="Larimer F."/>
            <person name="Land M."/>
            <person name="Kyrpides N.C."/>
            <person name="Mavromatis K."/>
            <person name="Richardson P."/>
            <person name="Rohde M."/>
            <person name="Goeker M."/>
            <person name="Klenk H.P."/>
            <person name="Zhang Y."/>
            <person name="Roberts G.P."/>
            <person name="Reslewic S."/>
            <person name="Schwartz D.C."/>
        </authorList>
    </citation>
    <scope>NUCLEOTIDE SEQUENCE [LARGE SCALE GENOMIC DNA]</scope>
    <source>
        <strain>ATCC 11170 / ATH 1.1.1 / DSM 467 / LMG 4362 / NCIMB 8255 / S1</strain>
    </source>
</reference>
<keyword id="KW-0004">4Fe-4S</keyword>
<keyword id="KW-0963">Cytoplasm</keyword>
<keyword id="KW-0408">Iron</keyword>
<keyword id="KW-0411">Iron-sulfur</keyword>
<keyword id="KW-0479">Metal-binding</keyword>
<keyword id="KW-1185">Reference proteome</keyword>
<keyword id="KW-0949">S-adenosyl-L-methionine</keyword>
<keyword id="KW-0808">Transferase</keyword>
<dbReference type="EC" id="2.8.4.4" evidence="1"/>
<dbReference type="EMBL" id="CP000230">
    <property type="protein sequence ID" value="ABC23608.1"/>
    <property type="molecule type" value="Genomic_DNA"/>
</dbReference>
<dbReference type="RefSeq" id="WP_011390438.1">
    <property type="nucleotide sequence ID" value="NC_007643.1"/>
</dbReference>
<dbReference type="RefSeq" id="YP_427895.1">
    <property type="nucleotide sequence ID" value="NC_007643.1"/>
</dbReference>
<dbReference type="SMR" id="Q2RQI7"/>
<dbReference type="STRING" id="269796.Rru_A2811"/>
<dbReference type="EnsemblBacteria" id="ABC23608">
    <property type="protein sequence ID" value="ABC23608"/>
    <property type="gene ID" value="Rru_A2811"/>
</dbReference>
<dbReference type="KEGG" id="rru:Rru_A2811"/>
<dbReference type="PATRIC" id="fig|269796.9.peg.2917"/>
<dbReference type="eggNOG" id="COG0621">
    <property type="taxonomic scope" value="Bacteria"/>
</dbReference>
<dbReference type="HOGENOM" id="CLU_018697_0_0_5"/>
<dbReference type="PhylomeDB" id="Q2RQI7"/>
<dbReference type="Proteomes" id="UP000001929">
    <property type="component" value="Chromosome"/>
</dbReference>
<dbReference type="GO" id="GO:0005829">
    <property type="term" value="C:cytosol"/>
    <property type="evidence" value="ECO:0007669"/>
    <property type="project" value="TreeGrafter"/>
</dbReference>
<dbReference type="GO" id="GO:0051539">
    <property type="term" value="F:4 iron, 4 sulfur cluster binding"/>
    <property type="evidence" value="ECO:0007669"/>
    <property type="project" value="UniProtKB-UniRule"/>
</dbReference>
<dbReference type="GO" id="GO:0035599">
    <property type="term" value="F:aspartic acid methylthiotransferase activity"/>
    <property type="evidence" value="ECO:0007669"/>
    <property type="project" value="TreeGrafter"/>
</dbReference>
<dbReference type="GO" id="GO:0046872">
    <property type="term" value="F:metal ion binding"/>
    <property type="evidence" value="ECO:0007669"/>
    <property type="project" value="UniProtKB-KW"/>
</dbReference>
<dbReference type="GO" id="GO:0103039">
    <property type="term" value="F:protein methylthiotransferase activity"/>
    <property type="evidence" value="ECO:0007669"/>
    <property type="project" value="UniProtKB-EC"/>
</dbReference>
<dbReference type="GO" id="GO:0006400">
    <property type="term" value="P:tRNA modification"/>
    <property type="evidence" value="ECO:0007669"/>
    <property type="project" value="InterPro"/>
</dbReference>
<dbReference type="CDD" id="cd01335">
    <property type="entry name" value="Radical_SAM"/>
    <property type="match status" value="1"/>
</dbReference>
<dbReference type="FunFam" id="2.40.50.140:FF:000060">
    <property type="entry name" value="Ribosomal protein S12 methylthiotransferase RimO"/>
    <property type="match status" value="1"/>
</dbReference>
<dbReference type="FunFam" id="3.40.50.12160:FF:000002">
    <property type="entry name" value="Ribosomal protein S12 methylthiotransferase RimO"/>
    <property type="match status" value="1"/>
</dbReference>
<dbReference type="FunFam" id="3.80.30.20:FF:000001">
    <property type="entry name" value="tRNA-2-methylthio-N(6)-dimethylallyladenosine synthase 2"/>
    <property type="match status" value="1"/>
</dbReference>
<dbReference type="Gene3D" id="3.40.50.12160">
    <property type="entry name" value="Methylthiotransferase, N-terminal domain"/>
    <property type="match status" value="1"/>
</dbReference>
<dbReference type="Gene3D" id="2.40.50.140">
    <property type="entry name" value="Nucleic acid-binding proteins"/>
    <property type="match status" value="1"/>
</dbReference>
<dbReference type="Gene3D" id="3.80.30.20">
    <property type="entry name" value="tm_1862 like domain"/>
    <property type="match status" value="1"/>
</dbReference>
<dbReference type="HAMAP" id="MF_01865">
    <property type="entry name" value="MTTase_RimO"/>
    <property type="match status" value="1"/>
</dbReference>
<dbReference type="InterPro" id="IPR006638">
    <property type="entry name" value="Elp3/MiaA/NifB-like_rSAM"/>
</dbReference>
<dbReference type="InterPro" id="IPR005839">
    <property type="entry name" value="Methylthiotransferase"/>
</dbReference>
<dbReference type="InterPro" id="IPR020612">
    <property type="entry name" value="Methylthiotransferase_CS"/>
</dbReference>
<dbReference type="InterPro" id="IPR013848">
    <property type="entry name" value="Methylthiotransferase_N"/>
</dbReference>
<dbReference type="InterPro" id="IPR038135">
    <property type="entry name" value="Methylthiotransferase_N_sf"/>
</dbReference>
<dbReference type="InterPro" id="IPR012340">
    <property type="entry name" value="NA-bd_OB-fold"/>
</dbReference>
<dbReference type="InterPro" id="IPR005840">
    <property type="entry name" value="Ribosomal_uS12_MeSTrfase_RimO"/>
</dbReference>
<dbReference type="InterPro" id="IPR007197">
    <property type="entry name" value="rSAM"/>
</dbReference>
<dbReference type="InterPro" id="IPR023404">
    <property type="entry name" value="rSAM_horseshoe"/>
</dbReference>
<dbReference type="InterPro" id="IPR002792">
    <property type="entry name" value="TRAM_dom"/>
</dbReference>
<dbReference type="NCBIfam" id="TIGR01125">
    <property type="entry name" value="30S ribosomal protein S12 methylthiotransferase RimO"/>
    <property type="match status" value="1"/>
</dbReference>
<dbReference type="NCBIfam" id="TIGR00089">
    <property type="entry name" value="MiaB/RimO family radical SAM methylthiotransferase"/>
    <property type="match status" value="1"/>
</dbReference>
<dbReference type="PANTHER" id="PTHR43837">
    <property type="entry name" value="RIBOSOMAL PROTEIN S12 METHYLTHIOTRANSFERASE RIMO"/>
    <property type="match status" value="1"/>
</dbReference>
<dbReference type="PANTHER" id="PTHR43837:SF1">
    <property type="entry name" value="RIBOSOMAL PROTEIN US12 METHYLTHIOTRANSFERASE RIMO"/>
    <property type="match status" value="1"/>
</dbReference>
<dbReference type="Pfam" id="PF04055">
    <property type="entry name" value="Radical_SAM"/>
    <property type="match status" value="1"/>
</dbReference>
<dbReference type="Pfam" id="PF18693">
    <property type="entry name" value="TRAM_2"/>
    <property type="match status" value="1"/>
</dbReference>
<dbReference type="Pfam" id="PF00919">
    <property type="entry name" value="UPF0004"/>
    <property type="match status" value="1"/>
</dbReference>
<dbReference type="SFLD" id="SFLDG01082">
    <property type="entry name" value="B12-binding_domain_containing"/>
    <property type="match status" value="1"/>
</dbReference>
<dbReference type="SFLD" id="SFLDG01061">
    <property type="entry name" value="methylthiotransferase"/>
    <property type="match status" value="1"/>
</dbReference>
<dbReference type="SFLD" id="SFLDF00274">
    <property type="entry name" value="ribosomal_protein_S12_methylth"/>
    <property type="match status" value="1"/>
</dbReference>
<dbReference type="SMART" id="SM00729">
    <property type="entry name" value="Elp3"/>
    <property type="match status" value="1"/>
</dbReference>
<dbReference type="SUPFAM" id="SSF102114">
    <property type="entry name" value="Radical SAM enzymes"/>
    <property type="match status" value="1"/>
</dbReference>
<dbReference type="PROSITE" id="PS51449">
    <property type="entry name" value="MTTASE_N"/>
    <property type="match status" value="1"/>
</dbReference>
<dbReference type="PROSITE" id="PS01278">
    <property type="entry name" value="MTTASE_RADICAL"/>
    <property type="match status" value="1"/>
</dbReference>
<dbReference type="PROSITE" id="PS51918">
    <property type="entry name" value="RADICAL_SAM"/>
    <property type="match status" value="1"/>
</dbReference>
<dbReference type="PROSITE" id="PS50926">
    <property type="entry name" value="TRAM"/>
    <property type="match status" value="1"/>
</dbReference>
<proteinExistence type="inferred from homology"/>
<gene>
    <name evidence="1" type="primary">rimO</name>
    <name type="ordered locus">Rru_A2811</name>
</gene>
<name>RIMO_RHORT</name>
<accession>Q2RQI7</accession>